<organism>
    <name type="scientific">Haemophilus influenzae (strain 86-028NP)</name>
    <dbReference type="NCBI Taxonomy" id="281310"/>
    <lineage>
        <taxon>Bacteria</taxon>
        <taxon>Pseudomonadati</taxon>
        <taxon>Pseudomonadota</taxon>
        <taxon>Gammaproteobacteria</taxon>
        <taxon>Pasteurellales</taxon>
        <taxon>Pasteurellaceae</taxon>
        <taxon>Haemophilus</taxon>
    </lineage>
</organism>
<sequence length="352" mass="38891">MTITTLSRQNIQALTPYQSARKLGGNGTIWLNANEYPTSPEFQLSGKDLNRYPEPQPQRVVQAYANYAGVSTENVLVTRGGDEGIELIIHTFCEPKQDAILFCPPTYGMYAVSAETAGVLSKSVPLTDDFQLNLPEIKNHLNDVKVVFVCSPNNPTGNLLKQSDILDLLQITAGKAIVVVDEAYIEFCPEASVINLLKNYPHLAIIRTLSKAFALAGLRCGFVLANPELIDILSKVIAPYPIPVPSADLAEQALRPANIATVQALTQELLSNRQWLAKALLVLHQVEKVYESEANYLLIKCQNGQAVFKALWEQGIILRDQNKTLHLQNCIRITVGTRNECEKVVEAIKEVK</sequence>
<accession>Q4QN73</accession>
<protein>
    <recommendedName>
        <fullName evidence="1">Histidinol-phosphate aminotransferase 1</fullName>
        <ecNumber evidence="1">2.6.1.9</ecNumber>
    </recommendedName>
    <alternativeName>
        <fullName evidence="1">Imidazole acetol-phosphate transaminase 1</fullName>
    </alternativeName>
</protein>
<feature type="chain" id="PRO_0000153370" description="Histidinol-phosphate aminotransferase 1">
    <location>
        <begin position="1"/>
        <end position="352"/>
    </location>
</feature>
<feature type="modified residue" description="N6-(pyridoxal phosphate)lysine" evidence="1">
    <location>
        <position position="211"/>
    </location>
</feature>
<name>HIS81_HAEI8</name>
<keyword id="KW-0028">Amino-acid biosynthesis</keyword>
<keyword id="KW-0032">Aminotransferase</keyword>
<keyword id="KW-0368">Histidine biosynthesis</keyword>
<keyword id="KW-0663">Pyridoxal phosphate</keyword>
<keyword id="KW-0808">Transferase</keyword>
<dbReference type="EC" id="2.6.1.9" evidence="1"/>
<dbReference type="EMBL" id="CP000057">
    <property type="protein sequence ID" value="AAX87524.1"/>
    <property type="status" value="ALT_INIT"/>
    <property type="molecule type" value="Genomic_DNA"/>
</dbReference>
<dbReference type="RefSeq" id="WP_041174737.1">
    <property type="nucleotide sequence ID" value="NC_007146.2"/>
</dbReference>
<dbReference type="SMR" id="Q4QN73"/>
<dbReference type="KEGG" id="hit:NTHI0601"/>
<dbReference type="HOGENOM" id="CLU_017584_3_1_6"/>
<dbReference type="UniPathway" id="UPA00031">
    <property type="reaction ID" value="UER00012"/>
</dbReference>
<dbReference type="Proteomes" id="UP000002525">
    <property type="component" value="Chromosome"/>
</dbReference>
<dbReference type="GO" id="GO:0004400">
    <property type="term" value="F:histidinol-phosphate transaminase activity"/>
    <property type="evidence" value="ECO:0007669"/>
    <property type="project" value="UniProtKB-UniRule"/>
</dbReference>
<dbReference type="GO" id="GO:0030170">
    <property type="term" value="F:pyridoxal phosphate binding"/>
    <property type="evidence" value="ECO:0007669"/>
    <property type="project" value="InterPro"/>
</dbReference>
<dbReference type="GO" id="GO:0000105">
    <property type="term" value="P:L-histidine biosynthetic process"/>
    <property type="evidence" value="ECO:0007669"/>
    <property type="project" value="UniProtKB-UniRule"/>
</dbReference>
<dbReference type="CDD" id="cd00609">
    <property type="entry name" value="AAT_like"/>
    <property type="match status" value="1"/>
</dbReference>
<dbReference type="Gene3D" id="3.90.1150.10">
    <property type="entry name" value="Aspartate Aminotransferase, domain 1"/>
    <property type="match status" value="1"/>
</dbReference>
<dbReference type="Gene3D" id="3.40.640.10">
    <property type="entry name" value="Type I PLP-dependent aspartate aminotransferase-like (Major domain)"/>
    <property type="match status" value="1"/>
</dbReference>
<dbReference type="HAMAP" id="MF_01023">
    <property type="entry name" value="HisC_aminotrans_2"/>
    <property type="match status" value="1"/>
</dbReference>
<dbReference type="InterPro" id="IPR001917">
    <property type="entry name" value="Aminotrans_II_pyridoxalP_BS"/>
</dbReference>
<dbReference type="InterPro" id="IPR004839">
    <property type="entry name" value="Aminotransferase_I/II_large"/>
</dbReference>
<dbReference type="InterPro" id="IPR005861">
    <property type="entry name" value="HisP_aminotrans"/>
</dbReference>
<dbReference type="InterPro" id="IPR015424">
    <property type="entry name" value="PyrdxlP-dep_Trfase"/>
</dbReference>
<dbReference type="InterPro" id="IPR015421">
    <property type="entry name" value="PyrdxlP-dep_Trfase_major"/>
</dbReference>
<dbReference type="InterPro" id="IPR015422">
    <property type="entry name" value="PyrdxlP-dep_Trfase_small"/>
</dbReference>
<dbReference type="NCBIfam" id="TIGR01141">
    <property type="entry name" value="hisC"/>
    <property type="match status" value="1"/>
</dbReference>
<dbReference type="PANTHER" id="PTHR42885:SF2">
    <property type="entry name" value="HISTIDINOL-PHOSPHATE AMINOTRANSFERASE"/>
    <property type="match status" value="1"/>
</dbReference>
<dbReference type="PANTHER" id="PTHR42885">
    <property type="entry name" value="HISTIDINOL-PHOSPHATE AMINOTRANSFERASE-RELATED"/>
    <property type="match status" value="1"/>
</dbReference>
<dbReference type="Pfam" id="PF00155">
    <property type="entry name" value="Aminotran_1_2"/>
    <property type="match status" value="1"/>
</dbReference>
<dbReference type="SUPFAM" id="SSF53383">
    <property type="entry name" value="PLP-dependent transferases"/>
    <property type="match status" value="1"/>
</dbReference>
<dbReference type="PROSITE" id="PS00599">
    <property type="entry name" value="AA_TRANSFER_CLASS_2"/>
    <property type="match status" value="1"/>
</dbReference>
<gene>
    <name evidence="1" type="primary">hisC1</name>
    <name type="ordered locus">NTHI0601</name>
</gene>
<proteinExistence type="inferred from homology"/>
<evidence type="ECO:0000255" key="1">
    <source>
        <dbReference type="HAMAP-Rule" id="MF_01023"/>
    </source>
</evidence>
<evidence type="ECO:0000305" key="2"/>
<comment type="catalytic activity">
    <reaction evidence="1">
        <text>L-histidinol phosphate + 2-oxoglutarate = 3-(imidazol-4-yl)-2-oxopropyl phosphate + L-glutamate</text>
        <dbReference type="Rhea" id="RHEA:23744"/>
        <dbReference type="ChEBI" id="CHEBI:16810"/>
        <dbReference type="ChEBI" id="CHEBI:29985"/>
        <dbReference type="ChEBI" id="CHEBI:57766"/>
        <dbReference type="ChEBI" id="CHEBI:57980"/>
        <dbReference type="EC" id="2.6.1.9"/>
    </reaction>
</comment>
<comment type="cofactor">
    <cofactor evidence="1">
        <name>pyridoxal 5'-phosphate</name>
        <dbReference type="ChEBI" id="CHEBI:597326"/>
    </cofactor>
</comment>
<comment type="pathway">
    <text evidence="1">Amino-acid biosynthesis; L-histidine biosynthesis; L-histidine from 5-phospho-alpha-D-ribose 1-diphosphate: step 7/9.</text>
</comment>
<comment type="subunit">
    <text evidence="1">Homodimer.</text>
</comment>
<comment type="similarity">
    <text evidence="1">Belongs to the class-II pyridoxal-phosphate-dependent aminotransferase family. Histidinol-phosphate aminotransferase subfamily.</text>
</comment>
<comment type="sequence caution" evidence="2">
    <conflict type="erroneous initiation">
        <sequence resource="EMBL-CDS" id="AAX87524"/>
    </conflict>
</comment>
<reference key="1">
    <citation type="journal article" date="2005" name="J. Bacteriol.">
        <title>Genomic sequence of an otitis media isolate of nontypeable Haemophilus influenzae: comparative study with H. influenzae serotype d, strain KW20.</title>
        <authorList>
            <person name="Harrison A."/>
            <person name="Dyer D.W."/>
            <person name="Gillaspy A."/>
            <person name="Ray W.C."/>
            <person name="Mungur R."/>
            <person name="Carson M.B."/>
            <person name="Zhong H."/>
            <person name="Gipson J."/>
            <person name="Gipson M."/>
            <person name="Johnson L.S."/>
            <person name="Lewis L."/>
            <person name="Bakaletz L.O."/>
            <person name="Munson R.S. Jr."/>
        </authorList>
    </citation>
    <scope>NUCLEOTIDE SEQUENCE [LARGE SCALE GENOMIC DNA]</scope>
    <source>
        <strain>86-028NP</strain>
    </source>
</reference>